<sequence length="116" mass="13376">MTNHKLIEAVTKSQLRTDLPSFRPGDTLRVHVRIIEGTRERIQVFEGIVIKRRGGGVSETFTVRKISSGVGVERTFPLHTPKIEKIEVKRRGKVRRAKLYYLRSLRGKAARIQEIR</sequence>
<evidence type="ECO:0000255" key="1">
    <source>
        <dbReference type="HAMAP-Rule" id="MF_00402"/>
    </source>
</evidence>
<evidence type="ECO:0000305" key="2"/>
<proteinExistence type="inferred from homology"/>
<organism>
    <name type="scientific">Staphylococcus aureus (strain Mu3 / ATCC 700698)</name>
    <dbReference type="NCBI Taxonomy" id="418127"/>
    <lineage>
        <taxon>Bacteria</taxon>
        <taxon>Bacillati</taxon>
        <taxon>Bacillota</taxon>
        <taxon>Bacilli</taxon>
        <taxon>Bacillales</taxon>
        <taxon>Staphylococcaceae</taxon>
        <taxon>Staphylococcus</taxon>
    </lineage>
</organism>
<feature type="chain" id="PRO_1000049751" description="Large ribosomal subunit protein bL19">
    <location>
        <begin position="1"/>
        <end position="116"/>
    </location>
</feature>
<keyword id="KW-0687">Ribonucleoprotein</keyword>
<keyword id="KW-0689">Ribosomal protein</keyword>
<dbReference type="EMBL" id="AP009324">
    <property type="protein sequence ID" value="BAF78114.1"/>
    <property type="molecule type" value="Genomic_DNA"/>
</dbReference>
<dbReference type="RefSeq" id="WP_000181402.1">
    <property type="nucleotide sequence ID" value="NC_009782.1"/>
</dbReference>
<dbReference type="SMR" id="A7X1L2"/>
<dbReference type="KEGG" id="saw:SAHV_1231"/>
<dbReference type="HOGENOM" id="CLU_103507_2_1_9"/>
<dbReference type="GO" id="GO:0022625">
    <property type="term" value="C:cytosolic large ribosomal subunit"/>
    <property type="evidence" value="ECO:0007669"/>
    <property type="project" value="TreeGrafter"/>
</dbReference>
<dbReference type="GO" id="GO:0003735">
    <property type="term" value="F:structural constituent of ribosome"/>
    <property type="evidence" value="ECO:0007669"/>
    <property type="project" value="InterPro"/>
</dbReference>
<dbReference type="GO" id="GO:0006412">
    <property type="term" value="P:translation"/>
    <property type="evidence" value="ECO:0007669"/>
    <property type="project" value="UniProtKB-UniRule"/>
</dbReference>
<dbReference type="FunFam" id="2.30.30.790:FF:000001">
    <property type="entry name" value="50S ribosomal protein L19"/>
    <property type="match status" value="1"/>
</dbReference>
<dbReference type="Gene3D" id="2.30.30.790">
    <property type="match status" value="1"/>
</dbReference>
<dbReference type="HAMAP" id="MF_00402">
    <property type="entry name" value="Ribosomal_bL19"/>
    <property type="match status" value="1"/>
</dbReference>
<dbReference type="InterPro" id="IPR001857">
    <property type="entry name" value="Ribosomal_bL19"/>
</dbReference>
<dbReference type="InterPro" id="IPR018257">
    <property type="entry name" value="Ribosomal_bL19_CS"/>
</dbReference>
<dbReference type="InterPro" id="IPR038657">
    <property type="entry name" value="Ribosomal_bL19_sf"/>
</dbReference>
<dbReference type="InterPro" id="IPR008991">
    <property type="entry name" value="Translation_prot_SH3-like_sf"/>
</dbReference>
<dbReference type="NCBIfam" id="TIGR01024">
    <property type="entry name" value="rplS_bact"/>
    <property type="match status" value="1"/>
</dbReference>
<dbReference type="PANTHER" id="PTHR15680:SF9">
    <property type="entry name" value="LARGE RIBOSOMAL SUBUNIT PROTEIN BL19M"/>
    <property type="match status" value="1"/>
</dbReference>
<dbReference type="PANTHER" id="PTHR15680">
    <property type="entry name" value="RIBOSOMAL PROTEIN L19"/>
    <property type="match status" value="1"/>
</dbReference>
<dbReference type="Pfam" id="PF01245">
    <property type="entry name" value="Ribosomal_L19"/>
    <property type="match status" value="1"/>
</dbReference>
<dbReference type="PIRSF" id="PIRSF002191">
    <property type="entry name" value="Ribosomal_L19"/>
    <property type="match status" value="1"/>
</dbReference>
<dbReference type="PRINTS" id="PR00061">
    <property type="entry name" value="RIBOSOMALL19"/>
</dbReference>
<dbReference type="SUPFAM" id="SSF50104">
    <property type="entry name" value="Translation proteins SH3-like domain"/>
    <property type="match status" value="1"/>
</dbReference>
<dbReference type="PROSITE" id="PS01015">
    <property type="entry name" value="RIBOSOMAL_L19"/>
    <property type="match status" value="1"/>
</dbReference>
<reference key="1">
    <citation type="journal article" date="2008" name="Antimicrob. Agents Chemother.">
        <title>Mutated response regulator graR is responsible for phenotypic conversion of Staphylococcus aureus from heterogeneous vancomycin-intermediate resistance to vancomycin-intermediate resistance.</title>
        <authorList>
            <person name="Neoh H.-M."/>
            <person name="Cui L."/>
            <person name="Yuzawa H."/>
            <person name="Takeuchi F."/>
            <person name="Matsuo M."/>
            <person name="Hiramatsu K."/>
        </authorList>
    </citation>
    <scope>NUCLEOTIDE SEQUENCE [LARGE SCALE GENOMIC DNA]</scope>
    <source>
        <strain>Mu3 / ATCC 700698</strain>
    </source>
</reference>
<accession>A7X1L2</accession>
<gene>
    <name evidence="1" type="primary">rplS</name>
    <name type="ordered locus">SAHV_1231</name>
</gene>
<name>RL19_STAA1</name>
<comment type="function">
    <text evidence="1">This protein is located at the 30S-50S ribosomal subunit interface and may play a role in the structure and function of the aminoacyl-tRNA binding site.</text>
</comment>
<comment type="similarity">
    <text evidence="1">Belongs to the bacterial ribosomal protein bL19 family.</text>
</comment>
<protein>
    <recommendedName>
        <fullName evidence="1">Large ribosomal subunit protein bL19</fullName>
    </recommendedName>
    <alternativeName>
        <fullName evidence="2">50S ribosomal protein L19</fullName>
    </alternativeName>
</protein>